<sequence length="336" mass="36324">MNYKDAGVNIDEGNKLVKMIKPIAKTTLTANVLEGIGGFAGLFEIKNYKNPVLISSTDGVGTKLKIAFMMDKHDTVGIDLVAMCVNDVIVTGAKPLFFLDYFATGKLKSETAVEVIKGIAEGCKIAGCALIGGETAELPGFYKEGEYDLAGFCVGIVEKEELIDTKSIKKGDAIIGLASSGIHSNGYSLVRKVFFEKNNFSVKDFIPELGMNLGDALLTPTKIYVKSIEALKELKIKGMAHITGGGFIDNIPRILRKSIAAKINKGSWKIPTIFNLIQRLGDIEEREMYRTFNMGIGMVVIVDPSDVDKALEKLNGIGEKAYVIGEIVESEGGVIL</sequence>
<proteinExistence type="inferred from homology"/>
<accession>B0K3Q6</accession>
<feature type="chain" id="PRO_1000193053" description="Phosphoribosylformylglycinamidine cyclo-ligase">
    <location>
        <begin position="1"/>
        <end position="336"/>
    </location>
</feature>
<keyword id="KW-0067">ATP-binding</keyword>
<keyword id="KW-0963">Cytoplasm</keyword>
<keyword id="KW-0436">Ligase</keyword>
<keyword id="KW-0547">Nucleotide-binding</keyword>
<keyword id="KW-0658">Purine biosynthesis</keyword>
<comment type="catalytic activity">
    <reaction evidence="1">
        <text>2-formamido-N(1)-(5-O-phospho-beta-D-ribosyl)acetamidine + ATP = 5-amino-1-(5-phospho-beta-D-ribosyl)imidazole + ADP + phosphate + H(+)</text>
        <dbReference type="Rhea" id="RHEA:23032"/>
        <dbReference type="ChEBI" id="CHEBI:15378"/>
        <dbReference type="ChEBI" id="CHEBI:30616"/>
        <dbReference type="ChEBI" id="CHEBI:43474"/>
        <dbReference type="ChEBI" id="CHEBI:137981"/>
        <dbReference type="ChEBI" id="CHEBI:147287"/>
        <dbReference type="ChEBI" id="CHEBI:456216"/>
        <dbReference type="EC" id="6.3.3.1"/>
    </reaction>
</comment>
<comment type="pathway">
    <text evidence="1">Purine metabolism; IMP biosynthesis via de novo pathway; 5-amino-1-(5-phospho-D-ribosyl)imidazole from N(2)-formyl-N(1)-(5-phospho-D-ribosyl)glycinamide: step 2/2.</text>
</comment>
<comment type="subcellular location">
    <subcellularLocation>
        <location evidence="1">Cytoplasm</location>
    </subcellularLocation>
</comment>
<comment type="similarity">
    <text evidence="1">Belongs to the AIR synthase family.</text>
</comment>
<evidence type="ECO:0000255" key="1">
    <source>
        <dbReference type="HAMAP-Rule" id="MF_00741"/>
    </source>
</evidence>
<dbReference type="EC" id="6.3.3.1" evidence="1"/>
<dbReference type="EMBL" id="CP000923">
    <property type="protein sequence ID" value="ABY91831.1"/>
    <property type="molecule type" value="Genomic_DNA"/>
</dbReference>
<dbReference type="RefSeq" id="WP_009051714.1">
    <property type="nucleotide sequence ID" value="NC_010320.1"/>
</dbReference>
<dbReference type="SMR" id="B0K3Q6"/>
<dbReference type="KEGG" id="tex:Teth514_0523"/>
<dbReference type="HOGENOM" id="CLU_047116_0_0_9"/>
<dbReference type="UniPathway" id="UPA00074">
    <property type="reaction ID" value="UER00129"/>
</dbReference>
<dbReference type="Proteomes" id="UP000002155">
    <property type="component" value="Chromosome"/>
</dbReference>
<dbReference type="GO" id="GO:0005829">
    <property type="term" value="C:cytosol"/>
    <property type="evidence" value="ECO:0007669"/>
    <property type="project" value="TreeGrafter"/>
</dbReference>
<dbReference type="GO" id="GO:0005524">
    <property type="term" value="F:ATP binding"/>
    <property type="evidence" value="ECO:0007669"/>
    <property type="project" value="UniProtKB-KW"/>
</dbReference>
<dbReference type="GO" id="GO:0004637">
    <property type="term" value="F:phosphoribosylamine-glycine ligase activity"/>
    <property type="evidence" value="ECO:0007669"/>
    <property type="project" value="TreeGrafter"/>
</dbReference>
<dbReference type="GO" id="GO:0004641">
    <property type="term" value="F:phosphoribosylformylglycinamidine cyclo-ligase activity"/>
    <property type="evidence" value="ECO:0007669"/>
    <property type="project" value="UniProtKB-UniRule"/>
</dbReference>
<dbReference type="GO" id="GO:0006189">
    <property type="term" value="P:'de novo' IMP biosynthetic process"/>
    <property type="evidence" value="ECO:0007669"/>
    <property type="project" value="UniProtKB-UniRule"/>
</dbReference>
<dbReference type="GO" id="GO:0046084">
    <property type="term" value="P:adenine biosynthetic process"/>
    <property type="evidence" value="ECO:0007669"/>
    <property type="project" value="TreeGrafter"/>
</dbReference>
<dbReference type="CDD" id="cd02196">
    <property type="entry name" value="PurM"/>
    <property type="match status" value="1"/>
</dbReference>
<dbReference type="FunFam" id="3.30.1330.10:FF:000001">
    <property type="entry name" value="Phosphoribosylformylglycinamidine cyclo-ligase"/>
    <property type="match status" value="1"/>
</dbReference>
<dbReference type="FunFam" id="3.90.650.10:FF:000001">
    <property type="entry name" value="Phosphoribosylformylglycinamidine cyclo-ligase"/>
    <property type="match status" value="1"/>
</dbReference>
<dbReference type="Gene3D" id="3.90.650.10">
    <property type="entry name" value="PurM-like C-terminal domain"/>
    <property type="match status" value="1"/>
</dbReference>
<dbReference type="Gene3D" id="3.30.1330.10">
    <property type="entry name" value="PurM-like, N-terminal domain"/>
    <property type="match status" value="1"/>
</dbReference>
<dbReference type="HAMAP" id="MF_00741">
    <property type="entry name" value="AIRS"/>
    <property type="match status" value="1"/>
</dbReference>
<dbReference type="InterPro" id="IPR010918">
    <property type="entry name" value="PurM-like_C_dom"/>
</dbReference>
<dbReference type="InterPro" id="IPR036676">
    <property type="entry name" value="PurM-like_C_sf"/>
</dbReference>
<dbReference type="InterPro" id="IPR016188">
    <property type="entry name" value="PurM-like_N"/>
</dbReference>
<dbReference type="InterPro" id="IPR036921">
    <property type="entry name" value="PurM-like_N_sf"/>
</dbReference>
<dbReference type="InterPro" id="IPR004733">
    <property type="entry name" value="PurM_cligase"/>
</dbReference>
<dbReference type="NCBIfam" id="TIGR00878">
    <property type="entry name" value="purM"/>
    <property type="match status" value="1"/>
</dbReference>
<dbReference type="PANTHER" id="PTHR10520:SF12">
    <property type="entry name" value="TRIFUNCTIONAL PURINE BIOSYNTHETIC PROTEIN ADENOSINE-3"/>
    <property type="match status" value="1"/>
</dbReference>
<dbReference type="PANTHER" id="PTHR10520">
    <property type="entry name" value="TRIFUNCTIONAL PURINE BIOSYNTHETIC PROTEIN ADENOSINE-3-RELATED"/>
    <property type="match status" value="1"/>
</dbReference>
<dbReference type="Pfam" id="PF00586">
    <property type="entry name" value="AIRS"/>
    <property type="match status" value="1"/>
</dbReference>
<dbReference type="Pfam" id="PF02769">
    <property type="entry name" value="AIRS_C"/>
    <property type="match status" value="1"/>
</dbReference>
<dbReference type="SUPFAM" id="SSF56042">
    <property type="entry name" value="PurM C-terminal domain-like"/>
    <property type="match status" value="1"/>
</dbReference>
<dbReference type="SUPFAM" id="SSF55326">
    <property type="entry name" value="PurM N-terminal domain-like"/>
    <property type="match status" value="1"/>
</dbReference>
<protein>
    <recommendedName>
        <fullName evidence="1">Phosphoribosylformylglycinamidine cyclo-ligase</fullName>
        <ecNumber evidence="1">6.3.3.1</ecNumber>
    </recommendedName>
    <alternativeName>
        <fullName evidence="1">AIR synthase</fullName>
    </alternativeName>
    <alternativeName>
        <fullName evidence="1">AIRS</fullName>
    </alternativeName>
    <alternativeName>
        <fullName evidence="1">Phosphoribosyl-aminoimidazole synthetase</fullName>
    </alternativeName>
</protein>
<gene>
    <name evidence="1" type="primary">purM</name>
    <name type="ordered locus">Teth514_0523</name>
</gene>
<name>PUR5_THEPX</name>
<reference key="1">
    <citation type="submission" date="2008-01" db="EMBL/GenBank/DDBJ databases">
        <title>Complete sequence of Thermoanaerobacter sp. X514.</title>
        <authorList>
            <consortium name="US DOE Joint Genome Institute"/>
            <person name="Copeland A."/>
            <person name="Lucas S."/>
            <person name="Lapidus A."/>
            <person name="Barry K."/>
            <person name="Glavina del Rio T."/>
            <person name="Dalin E."/>
            <person name="Tice H."/>
            <person name="Pitluck S."/>
            <person name="Bruce D."/>
            <person name="Goodwin L."/>
            <person name="Saunders E."/>
            <person name="Brettin T."/>
            <person name="Detter J.C."/>
            <person name="Han C."/>
            <person name="Schmutz J."/>
            <person name="Larimer F."/>
            <person name="Land M."/>
            <person name="Hauser L."/>
            <person name="Kyrpides N."/>
            <person name="Kim E."/>
            <person name="Hemme C."/>
            <person name="Fields M.W."/>
            <person name="He Z."/>
            <person name="Zhou J."/>
            <person name="Richardson P."/>
        </authorList>
    </citation>
    <scope>NUCLEOTIDE SEQUENCE [LARGE SCALE GENOMIC DNA]</scope>
    <source>
        <strain>X514</strain>
    </source>
</reference>
<organism>
    <name type="scientific">Thermoanaerobacter sp. (strain X514)</name>
    <dbReference type="NCBI Taxonomy" id="399726"/>
    <lineage>
        <taxon>Bacteria</taxon>
        <taxon>Bacillati</taxon>
        <taxon>Bacillota</taxon>
        <taxon>Clostridia</taxon>
        <taxon>Thermoanaerobacterales</taxon>
        <taxon>Thermoanaerobacteraceae</taxon>
        <taxon>Thermoanaerobacter</taxon>
    </lineage>
</organism>